<feature type="chain" id="PRO_1000068156" description="Large ribosomal subunit protein uL23">
    <location>
        <begin position="1"/>
        <end position="99"/>
    </location>
</feature>
<keyword id="KW-1185">Reference proteome</keyword>
<keyword id="KW-0687">Ribonucleoprotein</keyword>
<keyword id="KW-0689">Ribosomal protein</keyword>
<keyword id="KW-0694">RNA-binding</keyword>
<keyword id="KW-0699">rRNA-binding</keyword>
<sequence>MISEERLLKVILAPHISEKSTVCAENNNTVVFRVAIDATKAEVKAAVAKLFEVEVDSVRTLVNKGKTKRHGARTGRRSDWKKAYVTLAAGADIDFVGAE</sequence>
<evidence type="ECO:0000255" key="1">
    <source>
        <dbReference type="HAMAP-Rule" id="MF_01369"/>
    </source>
</evidence>
<evidence type="ECO:0000305" key="2"/>
<gene>
    <name evidence="1" type="primary">rplW</name>
    <name type="ordered locus">Shew_0160</name>
</gene>
<protein>
    <recommendedName>
        <fullName evidence="1">Large ribosomal subunit protein uL23</fullName>
    </recommendedName>
    <alternativeName>
        <fullName evidence="2">50S ribosomal protein L23</fullName>
    </alternativeName>
</protein>
<reference key="1">
    <citation type="submission" date="2007-03" db="EMBL/GenBank/DDBJ databases">
        <title>Complete sequence of Shewanella loihica PV-4.</title>
        <authorList>
            <consortium name="US DOE Joint Genome Institute"/>
            <person name="Copeland A."/>
            <person name="Lucas S."/>
            <person name="Lapidus A."/>
            <person name="Barry K."/>
            <person name="Detter J.C."/>
            <person name="Glavina del Rio T."/>
            <person name="Hammon N."/>
            <person name="Israni S."/>
            <person name="Dalin E."/>
            <person name="Tice H."/>
            <person name="Pitluck S."/>
            <person name="Chain P."/>
            <person name="Malfatti S."/>
            <person name="Shin M."/>
            <person name="Vergez L."/>
            <person name="Schmutz J."/>
            <person name="Larimer F."/>
            <person name="Land M."/>
            <person name="Hauser L."/>
            <person name="Kyrpides N."/>
            <person name="Mikhailova N."/>
            <person name="Romine M.F."/>
            <person name="Serres G."/>
            <person name="Fredrickson J."/>
            <person name="Tiedje J."/>
            <person name="Richardson P."/>
        </authorList>
    </citation>
    <scope>NUCLEOTIDE SEQUENCE [LARGE SCALE GENOMIC DNA]</scope>
    <source>
        <strain>ATCC BAA-1088 / PV-4</strain>
    </source>
</reference>
<comment type="function">
    <text evidence="1">One of the early assembly proteins it binds 23S rRNA. One of the proteins that surrounds the polypeptide exit tunnel on the outside of the ribosome. Forms the main docking site for trigger factor binding to the ribosome.</text>
</comment>
<comment type="subunit">
    <text evidence="1">Part of the 50S ribosomal subunit. Contacts protein L29, and trigger factor when it is bound to the ribosome.</text>
</comment>
<comment type="similarity">
    <text evidence="1">Belongs to the universal ribosomal protein uL23 family.</text>
</comment>
<dbReference type="EMBL" id="CP000606">
    <property type="protein sequence ID" value="ABO22032.1"/>
    <property type="molecule type" value="Genomic_DNA"/>
</dbReference>
<dbReference type="RefSeq" id="WP_011863968.1">
    <property type="nucleotide sequence ID" value="NC_009092.1"/>
</dbReference>
<dbReference type="SMR" id="A3Q984"/>
<dbReference type="STRING" id="323850.Shew_0160"/>
<dbReference type="KEGG" id="slo:Shew_0160"/>
<dbReference type="eggNOG" id="COG0089">
    <property type="taxonomic scope" value="Bacteria"/>
</dbReference>
<dbReference type="HOGENOM" id="CLU_037562_3_1_6"/>
<dbReference type="OrthoDB" id="9793353at2"/>
<dbReference type="Proteomes" id="UP000001558">
    <property type="component" value="Chromosome"/>
</dbReference>
<dbReference type="GO" id="GO:1990904">
    <property type="term" value="C:ribonucleoprotein complex"/>
    <property type="evidence" value="ECO:0007669"/>
    <property type="project" value="UniProtKB-KW"/>
</dbReference>
<dbReference type="GO" id="GO:0005840">
    <property type="term" value="C:ribosome"/>
    <property type="evidence" value="ECO:0007669"/>
    <property type="project" value="UniProtKB-KW"/>
</dbReference>
<dbReference type="GO" id="GO:0019843">
    <property type="term" value="F:rRNA binding"/>
    <property type="evidence" value="ECO:0007669"/>
    <property type="project" value="UniProtKB-UniRule"/>
</dbReference>
<dbReference type="GO" id="GO:0003735">
    <property type="term" value="F:structural constituent of ribosome"/>
    <property type="evidence" value="ECO:0007669"/>
    <property type="project" value="InterPro"/>
</dbReference>
<dbReference type="GO" id="GO:0006412">
    <property type="term" value="P:translation"/>
    <property type="evidence" value="ECO:0007669"/>
    <property type="project" value="UniProtKB-UniRule"/>
</dbReference>
<dbReference type="FunFam" id="3.30.70.330:FF:000001">
    <property type="entry name" value="50S ribosomal protein L23"/>
    <property type="match status" value="1"/>
</dbReference>
<dbReference type="Gene3D" id="3.30.70.330">
    <property type="match status" value="1"/>
</dbReference>
<dbReference type="HAMAP" id="MF_01369_B">
    <property type="entry name" value="Ribosomal_uL23_B"/>
    <property type="match status" value="1"/>
</dbReference>
<dbReference type="InterPro" id="IPR012677">
    <property type="entry name" value="Nucleotide-bd_a/b_plait_sf"/>
</dbReference>
<dbReference type="InterPro" id="IPR013025">
    <property type="entry name" value="Ribosomal_uL23-like"/>
</dbReference>
<dbReference type="InterPro" id="IPR012678">
    <property type="entry name" value="Ribosomal_uL23/eL15/eS24_sf"/>
</dbReference>
<dbReference type="InterPro" id="IPR001014">
    <property type="entry name" value="Ribosomal_uL23_CS"/>
</dbReference>
<dbReference type="NCBIfam" id="NF004358">
    <property type="entry name" value="PRK05738.1-1"/>
    <property type="match status" value="1"/>
</dbReference>
<dbReference type="NCBIfam" id="NF004359">
    <property type="entry name" value="PRK05738.1-3"/>
    <property type="match status" value="1"/>
</dbReference>
<dbReference type="NCBIfam" id="NF004363">
    <property type="entry name" value="PRK05738.2-4"/>
    <property type="match status" value="1"/>
</dbReference>
<dbReference type="PANTHER" id="PTHR11620">
    <property type="entry name" value="60S RIBOSOMAL PROTEIN L23A"/>
    <property type="match status" value="1"/>
</dbReference>
<dbReference type="Pfam" id="PF00276">
    <property type="entry name" value="Ribosomal_L23"/>
    <property type="match status" value="1"/>
</dbReference>
<dbReference type="SUPFAM" id="SSF54189">
    <property type="entry name" value="Ribosomal proteins S24e, L23 and L15e"/>
    <property type="match status" value="1"/>
</dbReference>
<dbReference type="PROSITE" id="PS00050">
    <property type="entry name" value="RIBOSOMAL_L23"/>
    <property type="match status" value="1"/>
</dbReference>
<accession>A3Q984</accession>
<name>RL23_SHELP</name>
<organism>
    <name type="scientific">Shewanella loihica (strain ATCC BAA-1088 / PV-4)</name>
    <dbReference type="NCBI Taxonomy" id="323850"/>
    <lineage>
        <taxon>Bacteria</taxon>
        <taxon>Pseudomonadati</taxon>
        <taxon>Pseudomonadota</taxon>
        <taxon>Gammaproteobacteria</taxon>
        <taxon>Alteromonadales</taxon>
        <taxon>Shewanellaceae</taxon>
        <taxon>Shewanella</taxon>
    </lineage>
</organism>
<proteinExistence type="inferred from homology"/>